<protein>
    <recommendedName>
        <fullName evidence="1">Chorismate synthase</fullName>
        <shortName evidence="1">CS</shortName>
        <ecNumber evidence="1">4.2.3.5</ecNumber>
    </recommendedName>
    <alternativeName>
        <fullName evidence="1">5-enolpyruvylshikimate-3-phosphate phospholyase</fullName>
    </alternativeName>
</protein>
<name>AROC_STAAE</name>
<gene>
    <name evidence="1" type="primary">aroC</name>
    <name type="ordered locus">NWMN_1377</name>
</gene>
<dbReference type="EC" id="4.2.3.5" evidence="1"/>
<dbReference type="EMBL" id="AP009351">
    <property type="protein sequence ID" value="BAF67649.1"/>
    <property type="molecule type" value="Genomic_DNA"/>
</dbReference>
<dbReference type="RefSeq" id="WP_001269929.1">
    <property type="nucleotide sequence ID" value="NZ_JBBIAE010000001.1"/>
</dbReference>
<dbReference type="SMR" id="A6QH17"/>
<dbReference type="KEGG" id="sae:NWMN_1377"/>
<dbReference type="HOGENOM" id="CLU_034547_2_0_9"/>
<dbReference type="UniPathway" id="UPA00053">
    <property type="reaction ID" value="UER00090"/>
</dbReference>
<dbReference type="Proteomes" id="UP000006386">
    <property type="component" value="Chromosome"/>
</dbReference>
<dbReference type="GO" id="GO:0005829">
    <property type="term" value="C:cytosol"/>
    <property type="evidence" value="ECO:0007669"/>
    <property type="project" value="TreeGrafter"/>
</dbReference>
<dbReference type="GO" id="GO:0004107">
    <property type="term" value="F:chorismate synthase activity"/>
    <property type="evidence" value="ECO:0007669"/>
    <property type="project" value="UniProtKB-UniRule"/>
</dbReference>
<dbReference type="GO" id="GO:0010181">
    <property type="term" value="F:FMN binding"/>
    <property type="evidence" value="ECO:0007669"/>
    <property type="project" value="TreeGrafter"/>
</dbReference>
<dbReference type="GO" id="GO:0008652">
    <property type="term" value="P:amino acid biosynthetic process"/>
    <property type="evidence" value="ECO:0007669"/>
    <property type="project" value="UniProtKB-KW"/>
</dbReference>
<dbReference type="GO" id="GO:0009073">
    <property type="term" value="P:aromatic amino acid family biosynthetic process"/>
    <property type="evidence" value="ECO:0007669"/>
    <property type="project" value="UniProtKB-KW"/>
</dbReference>
<dbReference type="GO" id="GO:0009423">
    <property type="term" value="P:chorismate biosynthetic process"/>
    <property type="evidence" value="ECO:0007669"/>
    <property type="project" value="UniProtKB-UniRule"/>
</dbReference>
<dbReference type="CDD" id="cd07304">
    <property type="entry name" value="Chorismate_synthase"/>
    <property type="match status" value="1"/>
</dbReference>
<dbReference type="FunFam" id="3.60.150.10:FF:000002">
    <property type="entry name" value="Chorismate synthase"/>
    <property type="match status" value="1"/>
</dbReference>
<dbReference type="Gene3D" id="3.60.150.10">
    <property type="entry name" value="Chorismate synthase AroC"/>
    <property type="match status" value="1"/>
</dbReference>
<dbReference type="HAMAP" id="MF_00300">
    <property type="entry name" value="Chorismate_synth"/>
    <property type="match status" value="1"/>
</dbReference>
<dbReference type="InterPro" id="IPR000453">
    <property type="entry name" value="Chorismate_synth"/>
</dbReference>
<dbReference type="InterPro" id="IPR035904">
    <property type="entry name" value="Chorismate_synth_AroC_sf"/>
</dbReference>
<dbReference type="InterPro" id="IPR020541">
    <property type="entry name" value="Chorismate_synthase_CS"/>
</dbReference>
<dbReference type="NCBIfam" id="TIGR00033">
    <property type="entry name" value="aroC"/>
    <property type="match status" value="1"/>
</dbReference>
<dbReference type="NCBIfam" id="NF003793">
    <property type="entry name" value="PRK05382.1"/>
    <property type="match status" value="1"/>
</dbReference>
<dbReference type="PANTHER" id="PTHR21085">
    <property type="entry name" value="CHORISMATE SYNTHASE"/>
    <property type="match status" value="1"/>
</dbReference>
<dbReference type="PANTHER" id="PTHR21085:SF0">
    <property type="entry name" value="CHORISMATE SYNTHASE"/>
    <property type="match status" value="1"/>
</dbReference>
<dbReference type="Pfam" id="PF01264">
    <property type="entry name" value="Chorismate_synt"/>
    <property type="match status" value="1"/>
</dbReference>
<dbReference type="PIRSF" id="PIRSF001456">
    <property type="entry name" value="Chorismate_synth"/>
    <property type="match status" value="1"/>
</dbReference>
<dbReference type="SUPFAM" id="SSF103263">
    <property type="entry name" value="Chorismate synthase, AroC"/>
    <property type="match status" value="1"/>
</dbReference>
<dbReference type="PROSITE" id="PS00787">
    <property type="entry name" value="CHORISMATE_SYNTHASE_1"/>
    <property type="match status" value="1"/>
</dbReference>
<dbReference type="PROSITE" id="PS00788">
    <property type="entry name" value="CHORISMATE_SYNTHASE_2"/>
    <property type="match status" value="1"/>
</dbReference>
<dbReference type="PROSITE" id="PS00789">
    <property type="entry name" value="CHORISMATE_SYNTHASE_3"/>
    <property type="match status" value="1"/>
</dbReference>
<organism>
    <name type="scientific">Staphylococcus aureus (strain Newman)</name>
    <dbReference type="NCBI Taxonomy" id="426430"/>
    <lineage>
        <taxon>Bacteria</taxon>
        <taxon>Bacillati</taxon>
        <taxon>Bacillota</taxon>
        <taxon>Bacilli</taxon>
        <taxon>Bacillales</taxon>
        <taxon>Staphylococcaceae</taxon>
        <taxon>Staphylococcus</taxon>
    </lineage>
</organism>
<accession>A6QH17</accession>
<evidence type="ECO:0000255" key="1">
    <source>
        <dbReference type="HAMAP-Rule" id="MF_00300"/>
    </source>
</evidence>
<sequence>MRYLTSGESHGPQLTVIVEGVPANIEIKVEDINKEMFKRQGGYGRGRRMQIEKDTVEIVSGVRNGYTLGSPITMVVTNDDFTHWRKIMGAAPISEEERENMKRTITKPRPGHADLVGGMKYNHRDLRNVLERSSARETAARVAVGALCKVLLQQLDIDIYSRVVEIGGIKDKDFYDSETFKANLDRNDVRVIDDSIAQAMRDKIDEAKNEGDSIGGVVQVVVENMPVGVGSYVHYDRKLDGKIAQGVVSINAFKGVSFGEGFKAAEKPGSEIQDEILYNSEIGYYRGSNHLGGLEGGMSNGMPIIVNGVMKPIPTLYKPLNSVDINTKEDFKATIERSDSCAVPAASIVCEHVVAFEIAKALLEEFQSNHIEQLKQQIIERRQLNIEF</sequence>
<keyword id="KW-0028">Amino-acid biosynthesis</keyword>
<keyword id="KW-0057">Aromatic amino acid biosynthesis</keyword>
<keyword id="KW-0274">FAD</keyword>
<keyword id="KW-0285">Flavoprotein</keyword>
<keyword id="KW-0288">FMN</keyword>
<keyword id="KW-0456">Lyase</keyword>
<keyword id="KW-0521">NADP</keyword>
<comment type="function">
    <text evidence="1">Catalyzes the anti-1,4-elimination of the C-3 phosphate and the C-6 proR hydrogen from 5-enolpyruvylshikimate-3-phosphate (EPSP) to yield chorismate, which is the branch point compound that serves as the starting substrate for the three terminal pathways of aromatic amino acid biosynthesis. This reaction introduces a second double bond into the aromatic ring system.</text>
</comment>
<comment type="catalytic activity">
    <reaction evidence="1">
        <text>5-O-(1-carboxyvinyl)-3-phosphoshikimate = chorismate + phosphate</text>
        <dbReference type="Rhea" id="RHEA:21020"/>
        <dbReference type="ChEBI" id="CHEBI:29748"/>
        <dbReference type="ChEBI" id="CHEBI:43474"/>
        <dbReference type="ChEBI" id="CHEBI:57701"/>
        <dbReference type="EC" id="4.2.3.5"/>
    </reaction>
</comment>
<comment type="cofactor">
    <cofactor evidence="1">
        <name>FMNH2</name>
        <dbReference type="ChEBI" id="CHEBI:57618"/>
    </cofactor>
    <text evidence="1">Reduced FMN (FMNH(2)).</text>
</comment>
<comment type="pathway">
    <text evidence="1">Metabolic intermediate biosynthesis; chorismate biosynthesis; chorismate from D-erythrose 4-phosphate and phosphoenolpyruvate: step 7/7.</text>
</comment>
<comment type="subunit">
    <text evidence="1">Homotetramer.</text>
</comment>
<comment type="similarity">
    <text evidence="1">Belongs to the chorismate synthase family.</text>
</comment>
<feature type="chain" id="PRO_1000071975" description="Chorismate synthase">
    <location>
        <begin position="1"/>
        <end position="388"/>
    </location>
</feature>
<feature type="binding site" evidence="1">
    <location>
        <position position="39"/>
    </location>
    <ligand>
        <name>NADP(+)</name>
        <dbReference type="ChEBI" id="CHEBI:58349"/>
    </ligand>
</feature>
<feature type="binding site" evidence="1">
    <location>
        <position position="45"/>
    </location>
    <ligand>
        <name>NADP(+)</name>
        <dbReference type="ChEBI" id="CHEBI:58349"/>
    </ligand>
</feature>
<feature type="binding site" evidence="1">
    <location>
        <begin position="132"/>
        <end position="134"/>
    </location>
    <ligand>
        <name>FMN</name>
        <dbReference type="ChEBI" id="CHEBI:58210"/>
    </ligand>
</feature>
<feature type="binding site" evidence="1">
    <location>
        <begin position="251"/>
        <end position="252"/>
    </location>
    <ligand>
        <name>FMN</name>
        <dbReference type="ChEBI" id="CHEBI:58210"/>
    </ligand>
</feature>
<feature type="binding site" evidence="1">
    <location>
        <position position="296"/>
    </location>
    <ligand>
        <name>FMN</name>
        <dbReference type="ChEBI" id="CHEBI:58210"/>
    </ligand>
</feature>
<feature type="binding site" evidence="1">
    <location>
        <begin position="311"/>
        <end position="315"/>
    </location>
    <ligand>
        <name>FMN</name>
        <dbReference type="ChEBI" id="CHEBI:58210"/>
    </ligand>
</feature>
<feature type="binding site" evidence="1">
    <location>
        <position position="337"/>
    </location>
    <ligand>
        <name>FMN</name>
        <dbReference type="ChEBI" id="CHEBI:58210"/>
    </ligand>
</feature>
<reference key="1">
    <citation type="journal article" date="2008" name="J. Bacteriol.">
        <title>Genome sequence of Staphylococcus aureus strain Newman and comparative analysis of staphylococcal genomes: polymorphism and evolution of two major pathogenicity islands.</title>
        <authorList>
            <person name="Baba T."/>
            <person name="Bae T."/>
            <person name="Schneewind O."/>
            <person name="Takeuchi F."/>
            <person name="Hiramatsu K."/>
        </authorList>
    </citation>
    <scope>NUCLEOTIDE SEQUENCE [LARGE SCALE GENOMIC DNA]</scope>
    <source>
        <strain>Newman</strain>
    </source>
</reference>
<proteinExistence type="inferred from homology"/>